<accession>C4KK87</accession>
<feature type="chain" id="PRO_1000204378" description="Translation initiation factor 2 subunit beta">
    <location>
        <begin position="1"/>
        <end position="139"/>
    </location>
</feature>
<protein>
    <recommendedName>
        <fullName evidence="1">Translation initiation factor 2 subunit beta</fullName>
    </recommendedName>
    <alternativeName>
        <fullName evidence="1">aIF2-beta</fullName>
    </alternativeName>
    <alternativeName>
        <fullName evidence="1">eIF-2-beta</fullName>
    </alternativeName>
</protein>
<sequence length="139" mass="15938">MSSEKEYVEMLDRLYSKLPEKGRKEGTQALPNLIIFNIGNTTMIRNFAEYCDRIRREDKICMKYLLKELAAPGNVDDKGELIIQGKFSSQVINTLMERFLKAYVECSTCKSLDTVLKKEKKSWYIVCLACGAQTPVKPL</sequence>
<dbReference type="EMBL" id="CP001402">
    <property type="protein sequence ID" value="ACR40828.1"/>
    <property type="molecule type" value="Genomic_DNA"/>
</dbReference>
<dbReference type="SMR" id="C4KK87"/>
<dbReference type="KEGG" id="sid:M164_0194"/>
<dbReference type="HOGENOM" id="CLU_026663_3_1_2"/>
<dbReference type="Proteomes" id="UP000001479">
    <property type="component" value="Chromosome"/>
</dbReference>
<dbReference type="GO" id="GO:0003743">
    <property type="term" value="F:translation initiation factor activity"/>
    <property type="evidence" value="ECO:0007669"/>
    <property type="project" value="UniProtKB-UniRule"/>
</dbReference>
<dbReference type="FunFam" id="3.30.30.170:FF:000001">
    <property type="entry name" value="Eukaryotic translation initiation factor 2 subunit"/>
    <property type="match status" value="1"/>
</dbReference>
<dbReference type="Gene3D" id="3.30.30.170">
    <property type="match status" value="1"/>
</dbReference>
<dbReference type="HAMAP" id="MF_00232">
    <property type="entry name" value="eIF_2_beta"/>
    <property type="match status" value="1"/>
</dbReference>
<dbReference type="InterPro" id="IPR045196">
    <property type="entry name" value="IF2/IF5"/>
</dbReference>
<dbReference type="InterPro" id="IPR004458">
    <property type="entry name" value="TIF2_bsu_arc"/>
</dbReference>
<dbReference type="InterPro" id="IPR002735">
    <property type="entry name" value="Transl_init_fac_IF2/IF5_dom"/>
</dbReference>
<dbReference type="InterPro" id="IPR016189">
    <property type="entry name" value="Transl_init_fac_IF2/IF5_N"/>
</dbReference>
<dbReference type="InterPro" id="IPR016190">
    <property type="entry name" value="Transl_init_fac_IF2/IF5_Zn-bd"/>
</dbReference>
<dbReference type="NCBIfam" id="NF003067">
    <property type="entry name" value="PRK03988.1"/>
    <property type="match status" value="1"/>
</dbReference>
<dbReference type="PANTHER" id="PTHR23001">
    <property type="entry name" value="EUKARYOTIC TRANSLATION INITIATION FACTOR"/>
    <property type="match status" value="1"/>
</dbReference>
<dbReference type="PANTHER" id="PTHR23001:SF3">
    <property type="entry name" value="EUKARYOTIC TRANSLATION INITIATION FACTOR 2 SUBUNIT 2"/>
    <property type="match status" value="1"/>
</dbReference>
<dbReference type="Pfam" id="PF01873">
    <property type="entry name" value="eIF-5_eIF-2B"/>
    <property type="match status" value="1"/>
</dbReference>
<dbReference type="SMART" id="SM00653">
    <property type="entry name" value="eIF2B_5"/>
    <property type="match status" value="1"/>
</dbReference>
<dbReference type="SUPFAM" id="SSF100966">
    <property type="entry name" value="Translation initiation factor 2 beta, aIF2beta, N-terminal domain"/>
    <property type="match status" value="1"/>
</dbReference>
<dbReference type="SUPFAM" id="SSF75689">
    <property type="entry name" value="Zinc-binding domain of translation initiation factor 2 beta"/>
    <property type="match status" value="1"/>
</dbReference>
<name>IF2B_SACI6</name>
<comment type="function">
    <text evidence="1">eIF-2 functions in the early steps of protein synthesis by forming a ternary complex with GTP and initiator tRNA.</text>
</comment>
<comment type="subunit">
    <text evidence="1">Heterotrimer composed of an alpha, a beta and a gamma chain.</text>
</comment>
<comment type="similarity">
    <text evidence="1">Belongs to the eIF-2-beta/eIF-5 family.</text>
</comment>
<proteinExistence type="inferred from homology"/>
<evidence type="ECO:0000255" key="1">
    <source>
        <dbReference type="HAMAP-Rule" id="MF_00232"/>
    </source>
</evidence>
<gene>
    <name evidence="1" type="primary">eif2b</name>
    <name type="ordered locus">M164_0194</name>
</gene>
<organism>
    <name type="scientific">Saccharolobus islandicus (strain M.16.4 / Kamchatka #3)</name>
    <name type="common">Sulfolobus islandicus</name>
    <dbReference type="NCBI Taxonomy" id="426118"/>
    <lineage>
        <taxon>Archaea</taxon>
        <taxon>Thermoproteota</taxon>
        <taxon>Thermoprotei</taxon>
        <taxon>Sulfolobales</taxon>
        <taxon>Sulfolobaceae</taxon>
        <taxon>Saccharolobus</taxon>
    </lineage>
</organism>
<reference key="1">
    <citation type="journal article" date="2009" name="Proc. Natl. Acad. Sci. U.S.A.">
        <title>Biogeography of the Sulfolobus islandicus pan-genome.</title>
        <authorList>
            <person name="Reno M.L."/>
            <person name="Held N.L."/>
            <person name="Fields C.J."/>
            <person name="Burke P.V."/>
            <person name="Whitaker R.J."/>
        </authorList>
    </citation>
    <scope>NUCLEOTIDE SEQUENCE [LARGE SCALE GENOMIC DNA]</scope>
    <source>
        <strain>M.16.4 / Kamchatka #3</strain>
    </source>
</reference>
<keyword id="KW-0396">Initiation factor</keyword>
<keyword id="KW-0648">Protein biosynthesis</keyword>